<keyword id="KW-0175">Coiled coil</keyword>
<keyword id="KW-1185">Reference proteome</keyword>
<organismHost>
    <name type="scientific">Acanthamoeba polyphaga</name>
    <name type="common">Amoeba</name>
    <dbReference type="NCBI Taxonomy" id="5757"/>
</organismHost>
<name>YL421_MIMIV</name>
<reference key="1">
    <citation type="journal article" date="2004" name="Science">
        <title>The 1.2-megabase genome sequence of Mimivirus.</title>
        <authorList>
            <person name="Raoult D."/>
            <person name="Audic S."/>
            <person name="Robert C."/>
            <person name="Abergel C."/>
            <person name="Renesto P."/>
            <person name="Ogata H."/>
            <person name="La Scola B."/>
            <person name="Susan M."/>
            <person name="Claverie J.-M."/>
        </authorList>
    </citation>
    <scope>NUCLEOTIDE SEQUENCE [LARGE SCALE GENOMIC DNA]</scope>
    <source>
        <strain>Rowbotham-Bradford</strain>
    </source>
</reference>
<protein>
    <recommendedName>
        <fullName>Uncharacterized protein L421</fullName>
    </recommendedName>
</protein>
<organism>
    <name type="scientific">Acanthamoeba polyphaga mimivirus</name>
    <name type="common">APMV</name>
    <dbReference type="NCBI Taxonomy" id="212035"/>
    <lineage>
        <taxon>Viruses</taxon>
        <taxon>Varidnaviria</taxon>
        <taxon>Bamfordvirae</taxon>
        <taxon>Nucleocytoviricota</taxon>
        <taxon>Megaviricetes</taxon>
        <taxon>Imitervirales</taxon>
        <taxon>Mimiviridae</taxon>
        <taxon>Megamimivirinae</taxon>
        <taxon>Mimivirus</taxon>
        <taxon>Mimivirus bradfordmassiliense</taxon>
    </lineage>
</organism>
<sequence length="209" mass="24101">MENLPKINHFRDLIKTLNIQIKNKQHGLISIEKQLSVAIDNVENLCLIRNKLKTDIENLLENKIDVENKLLVLRNQTEYIVSSTVKTVVKKFGVVPDINRLDQCIRYLIMTFHPILNPRKPTTDELIKLGPEKIILKAHEFYNNILVMNSGPHVFFHTHDNYQLCEWDGKSTKCKCGSTCVFWCIEECNLLTDISLSCKNPIGYAKCGF</sequence>
<dbReference type="EMBL" id="AY653733">
    <property type="protein sequence ID" value="AAV50690.1"/>
    <property type="molecule type" value="Genomic_DNA"/>
</dbReference>
<dbReference type="SMR" id="Q5UQM1"/>
<dbReference type="KEGG" id="vg:9925042"/>
<dbReference type="OrthoDB" id="34160at10239"/>
<dbReference type="Proteomes" id="UP000001134">
    <property type="component" value="Genome"/>
</dbReference>
<dbReference type="InterPro" id="IPR043878">
    <property type="entry name" value="DUF5854"/>
</dbReference>
<dbReference type="Pfam" id="PF19172">
    <property type="entry name" value="DUF5854"/>
    <property type="match status" value="1"/>
</dbReference>
<gene>
    <name type="ordered locus">MIMI_L421</name>
</gene>
<accession>Q5UQM1</accession>
<evidence type="ECO:0000255" key="1"/>
<feature type="chain" id="PRO_0000071280" description="Uncharacterized protein L421">
    <location>
        <begin position="1"/>
        <end position="209"/>
    </location>
</feature>
<feature type="coiled-coil region" evidence="1">
    <location>
        <begin position="41"/>
        <end position="76"/>
    </location>
</feature>
<proteinExistence type="predicted"/>